<feature type="chain" id="PRO_0000198378" description="Ribulokinase">
    <location>
        <begin position="1"/>
        <end position="563"/>
    </location>
</feature>
<accession>Q66AF7</accession>
<gene>
    <name evidence="1" type="primary">araB</name>
    <name type="ordered locus">YPTB2173</name>
</gene>
<proteinExistence type="inferred from homology"/>
<dbReference type="EC" id="2.7.1.16" evidence="1"/>
<dbReference type="EMBL" id="BX936398">
    <property type="protein sequence ID" value="CAH21411.1"/>
    <property type="status" value="ALT_INIT"/>
    <property type="molecule type" value="Genomic_DNA"/>
</dbReference>
<dbReference type="RefSeq" id="WP_011192464.1">
    <property type="nucleotide sequence ID" value="NZ_CP009712.1"/>
</dbReference>
<dbReference type="SMR" id="Q66AF7"/>
<dbReference type="KEGG" id="yps:YPTB2173"/>
<dbReference type="UniPathway" id="UPA00145">
    <property type="reaction ID" value="UER00566"/>
</dbReference>
<dbReference type="Proteomes" id="UP000001011">
    <property type="component" value="Chromosome"/>
</dbReference>
<dbReference type="GO" id="GO:0005737">
    <property type="term" value="C:cytoplasm"/>
    <property type="evidence" value="ECO:0007669"/>
    <property type="project" value="TreeGrafter"/>
</dbReference>
<dbReference type="GO" id="GO:0005524">
    <property type="term" value="F:ATP binding"/>
    <property type="evidence" value="ECO:0007669"/>
    <property type="project" value="UniProtKB-KW"/>
</dbReference>
<dbReference type="GO" id="GO:0019150">
    <property type="term" value="F:D-ribulokinase activity"/>
    <property type="evidence" value="ECO:0007669"/>
    <property type="project" value="RHEA"/>
</dbReference>
<dbReference type="GO" id="GO:0008741">
    <property type="term" value="F:ribulokinase activity"/>
    <property type="evidence" value="ECO:0007669"/>
    <property type="project" value="UniProtKB-UniRule"/>
</dbReference>
<dbReference type="GO" id="GO:0019569">
    <property type="term" value="P:L-arabinose catabolic process to xylulose 5-phosphate"/>
    <property type="evidence" value="ECO:0007669"/>
    <property type="project" value="UniProtKB-UniRule"/>
</dbReference>
<dbReference type="CDD" id="cd07781">
    <property type="entry name" value="ASKHA_NBD_FGGY_L-RBK"/>
    <property type="match status" value="1"/>
</dbReference>
<dbReference type="Gene3D" id="1.20.58.2240">
    <property type="match status" value="1"/>
</dbReference>
<dbReference type="Gene3D" id="3.30.420.40">
    <property type="match status" value="1"/>
</dbReference>
<dbReference type="HAMAP" id="MF_00520">
    <property type="entry name" value="Ribulokinase"/>
    <property type="match status" value="1"/>
</dbReference>
<dbReference type="InterPro" id="IPR043129">
    <property type="entry name" value="ATPase_NBD"/>
</dbReference>
<dbReference type="InterPro" id="IPR018485">
    <property type="entry name" value="FGGY_C"/>
</dbReference>
<dbReference type="InterPro" id="IPR005929">
    <property type="entry name" value="Ribulokinase"/>
</dbReference>
<dbReference type="NCBIfam" id="TIGR01234">
    <property type="entry name" value="L-ribulokinase"/>
    <property type="match status" value="1"/>
</dbReference>
<dbReference type="NCBIfam" id="NF003154">
    <property type="entry name" value="PRK04123.1"/>
    <property type="match status" value="1"/>
</dbReference>
<dbReference type="PANTHER" id="PTHR43435:SF4">
    <property type="entry name" value="FGGY CARBOHYDRATE KINASE DOMAIN-CONTAINING PROTEIN"/>
    <property type="match status" value="1"/>
</dbReference>
<dbReference type="PANTHER" id="PTHR43435">
    <property type="entry name" value="RIBULOKINASE"/>
    <property type="match status" value="1"/>
</dbReference>
<dbReference type="Pfam" id="PF02782">
    <property type="entry name" value="FGGY_C"/>
    <property type="match status" value="1"/>
</dbReference>
<dbReference type="SUPFAM" id="SSF53067">
    <property type="entry name" value="Actin-like ATPase domain"/>
    <property type="match status" value="2"/>
</dbReference>
<sequence>MISADGAIALGLDFGSDSVRVLAVDCQHGTEIDTEVVYYPRWKKGLYCQAAQNQFRHHPLDYIEAMEQAIRQMVKRLSEEQRQHIVGIGVDSTGSTPAPIDEQGQVLALRPDFADNPNAMFVLWKDHTAIEEAEEINRLCRSGEFADYSRYIGGVYSSEWFWAKILHVTRADVAVREAAVSWIELCDWVPALLSGTTAPQDIQRGRCSAGHKSLWHPSWGGLPPRAFLAALDTSLVNDLDYPMFTDTYTAERPVGQITAEWAERLGLPTTVILSGGAFDCHMGAVGAGAQPYTLVKVIGTSTCDILIADDQRVGDRAIAGICGQVEGSVLPGWIGMEAGQSAFGDMYAWFSNLLSWPLHQAALTQPEWQPQLKQIESNLLASLTCAWAQNPSLDHLPVVLDWFNGRRTPNANQRLKGVITDLNLGTDAPTLFGGFIAATAFGARAIMECFEQQDIPVENVLALGGIARKSPVIMQVCADVMNRPLQIVASDQCCALGAAIFAAVAAGAHEDVPTAQRHMACNIERTLIPDPVQVVRYQQLYQRYQQWCHTAEPHYAPVTKAIH</sequence>
<organism>
    <name type="scientific">Yersinia pseudotuberculosis serotype I (strain IP32953)</name>
    <dbReference type="NCBI Taxonomy" id="273123"/>
    <lineage>
        <taxon>Bacteria</taxon>
        <taxon>Pseudomonadati</taxon>
        <taxon>Pseudomonadota</taxon>
        <taxon>Gammaproteobacteria</taxon>
        <taxon>Enterobacterales</taxon>
        <taxon>Yersiniaceae</taxon>
        <taxon>Yersinia</taxon>
    </lineage>
</organism>
<reference key="1">
    <citation type="journal article" date="2004" name="Proc. Natl. Acad. Sci. U.S.A.">
        <title>Insights into the evolution of Yersinia pestis through whole-genome comparison with Yersinia pseudotuberculosis.</title>
        <authorList>
            <person name="Chain P.S.G."/>
            <person name="Carniel E."/>
            <person name="Larimer F.W."/>
            <person name="Lamerdin J."/>
            <person name="Stoutland P.O."/>
            <person name="Regala W.M."/>
            <person name="Georgescu A.M."/>
            <person name="Vergez L.M."/>
            <person name="Land M.L."/>
            <person name="Motin V.L."/>
            <person name="Brubaker R.R."/>
            <person name="Fowler J."/>
            <person name="Hinnebusch J."/>
            <person name="Marceau M."/>
            <person name="Medigue C."/>
            <person name="Simonet M."/>
            <person name="Chenal-Francisque V."/>
            <person name="Souza B."/>
            <person name="Dacheux D."/>
            <person name="Elliott J.M."/>
            <person name="Derbise A."/>
            <person name="Hauser L.J."/>
            <person name="Garcia E."/>
        </authorList>
    </citation>
    <scope>NUCLEOTIDE SEQUENCE [LARGE SCALE GENOMIC DNA]</scope>
    <source>
        <strain>IP32953</strain>
    </source>
</reference>
<protein>
    <recommendedName>
        <fullName evidence="1">Ribulokinase</fullName>
        <ecNumber evidence="1">2.7.1.16</ecNumber>
    </recommendedName>
</protein>
<keyword id="KW-0054">Arabinose catabolism</keyword>
<keyword id="KW-0067">ATP-binding</keyword>
<keyword id="KW-0119">Carbohydrate metabolism</keyword>
<keyword id="KW-0418">Kinase</keyword>
<keyword id="KW-0547">Nucleotide-binding</keyword>
<keyword id="KW-0808">Transferase</keyword>
<evidence type="ECO:0000255" key="1">
    <source>
        <dbReference type="HAMAP-Rule" id="MF_00520"/>
    </source>
</evidence>
<evidence type="ECO:0000305" key="2"/>
<comment type="catalytic activity">
    <reaction evidence="1">
        <text>D-ribulose + ATP = D-ribulose 5-phosphate + ADP + H(+)</text>
        <dbReference type="Rhea" id="RHEA:17601"/>
        <dbReference type="ChEBI" id="CHEBI:15378"/>
        <dbReference type="ChEBI" id="CHEBI:17173"/>
        <dbReference type="ChEBI" id="CHEBI:30616"/>
        <dbReference type="ChEBI" id="CHEBI:58121"/>
        <dbReference type="ChEBI" id="CHEBI:456216"/>
        <dbReference type="EC" id="2.7.1.16"/>
    </reaction>
</comment>
<comment type="catalytic activity">
    <reaction evidence="1">
        <text>L-ribulose + ATP = L-ribulose 5-phosphate + ADP + H(+)</text>
        <dbReference type="Rhea" id="RHEA:22072"/>
        <dbReference type="ChEBI" id="CHEBI:15378"/>
        <dbReference type="ChEBI" id="CHEBI:16880"/>
        <dbReference type="ChEBI" id="CHEBI:30616"/>
        <dbReference type="ChEBI" id="CHEBI:58226"/>
        <dbReference type="ChEBI" id="CHEBI:456216"/>
        <dbReference type="EC" id="2.7.1.16"/>
    </reaction>
</comment>
<comment type="pathway">
    <text evidence="1">Carbohydrate degradation; L-arabinose degradation via L-ribulose; D-xylulose 5-phosphate from L-arabinose (bacterial route): step 2/3.</text>
</comment>
<comment type="similarity">
    <text evidence="1">Belongs to the ribulokinase family.</text>
</comment>
<comment type="sequence caution" evidence="2">
    <conflict type="erroneous initiation">
        <sequence resource="EMBL-CDS" id="CAH21411"/>
    </conflict>
</comment>
<name>ARAB_YERPS</name>